<proteinExistence type="evidence at transcript level"/>
<dbReference type="EMBL" id="HM543173">
    <property type="protein sequence ID" value="AEJ88238.1"/>
    <property type="molecule type" value="Genomic_DNA"/>
</dbReference>
<dbReference type="SMR" id="L7NCQ5"/>
<dbReference type="GlyCosmos" id="L7NCQ5">
    <property type="glycosylation" value="1 site, No reported glycans"/>
</dbReference>
<dbReference type="VEuPathDB" id="FungiDB:DVH05_022932"/>
<dbReference type="GO" id="GO:0005576">
    <property type="term" value="C:extracellular region"/>
    <property type="evidence" value="ECO:0007669"/>
    <property type="project" value="UniProtKB-SubCell"/>
</dbReference>
<dbReference type="InterPro" id="IPR008701">
    <property type="entry name" value="NPP1"/>
</dbReference>
<dbReference type="PANTHER" id="PTHR33657">
    <property type="entry name" value="DOMAIN PROTEIN, PUTATIVE (AFU_ORTHOLOGUE AFUA_5G00600)-RELATED"/>
    <property type="match status" value="1"/>
</dbReference>
<dbReference type="PANTHER" id="PTHR33657:SF8">
    <property type="entry name" value="DOMAIN PROTEIN, PUTATIVE (AFU_ORTHOLOGUE AFUA_5G00600)-RELATED"/>
    <property type="match status" value="1"/>
</dbReference>
<dbReference type="Pfam" id="PF05630">
    <property type="entry name" value="NPP1"/>
    <property type="match status" value="1"/>
</dbReference>
<sequence>MRLFAFLWSSVAFLSTVQAQVSQTASQTQDDSSTPTPTPTDKYVNIADALRTKTPMATPNRTIMPTRQDPRATEPPTPEPTYLPTPSPTPAPTPDPGPWVAKWMDHDQVQPFKQPDPVTVSEKAAVKFKPQIHITNGCHPYPAVTWWGETSGGLKTKGAPSAGCKGSGWGSQVYGRSTWVKGVWAIMYSWYFPKDSPSTGLGHRHDWEHVIVWIDNPDIENPKILAVTPSAHSGYSKQVPPSADCVDGTSVKVKYESKWPINHALESTTEGGETQDLIMWNQLSENALRAMNSVTWGDANCPFCDGNFQAKLDKAWPF</sequence>
<comment type="function">
    <text evidence="5">Secreted effector that contributes moderately to virulence during infection by P.capsici. Does not cause visible reaction of C.annuum for several days after inoculation, but by 7 days after inoculation, small necrotic lesions become visible. Leads only to chlorotic areas, without necrosis at 7 days after non-host N.benthamiana leaves infection.</text>
</comment>
<comment type="subcellular location">
    <subcellularLocation>
        <location evidence="9">Secreted</location>
    </subcellularLocation>
</comment>
<comment type="induction">
    <text evidence="5">Expression gradually increases to a maximum at 7 days after inoculation of pepper leaves.</text>
</comment>
<comment type="domain">
    <text evidence="1">Key residues/motif important for the effector activities are degenerated in most NLPs, including the nlp24 peptide consisting of the conserved region I (11-aa immunogenic part) and conserved region II (the heptapeptide GHRHDWE motif) that is important for phytotoxic activity.</text>
</comment>
<comment type="similarity">
    <text evidence="8">Belongs to the Necrosis inducing protein (NPP1) family.</text>
</comment>
<reference key="1">
    <citation type="journal article" date="2011" name="Genet. Mol. Res.">
        <title>Identification of 18 genes encoding necrosis-inducing proteins from the plant pathogen Phytophthora capsici (Pythiaceae: Oomycetes).</title>
        <authorList>
            <person name="Feng B.Z."/>
            <person name="Li P.Q."/>
            <person name="Fu L."/>
            <person name="Sun B.B."/>
            <person name="Zhang X.G."/>
        </authorList>
    </citation>
    <scope>NUCLEOTIDE SEQUENCE [GENOMIC DNA]</scope>
    <scope>DOMAIN</scope>
</reference>
<reference key="2">
    <citation type="journal article" date="2014" name="BMC Plant Biol.">
        <title>Characterization of necrosis-inducing NLP proteins in Phytophthora capsici.</title>
        <authorList>
            <person name="Feng B.Z."/>
            <person name="Zhu X.P."/>
            <person name="Fu L."/>
            <person name="Lv R.F."/>
            <person name="Storey D."/>
            <person name="Tooley P."/>
            <person name="Zhang X.G."/>
        </authorList>
    </citation>
    <scope>INDUCTION</scope>
    <scope>FUNCTION</scope>
</reference>
<gene>
    <name evidence="7" type="primary">NLP7</name>
    <name evidence="6" type="synonym">NPP7</name>
</gene>
<accession>L7NCQ5</accession>
<protein>
    <recommendedName>
        <fullName evidence="7">NLP effector protein 7</fullName>
    </recommendedName>
    <alternativeName>
        <fullName evidence="6">Necrosis-inducing protein 7</fullName>
    </alternativeName>
    <alternativeName>
        <fullName evidence="6">Nep1-like protein 7</fullName>
    </alternativeName>
</protein>
<keyword id="KW-0325">Glycoprotein</keyword>
<keyword id="KW-0964">Secreted</keyword>
<keyword id="KW-0732">Signal</keyword>
<keyword id="KW-0843">Virulence</keyword>
<organism>
    <name type="scientific">Phytophthora capsici</name>
    <dbReference type="NCBI Taxonomy" id="4784"/>
    <lineage>
        <taxon>Eukaryota</taxon>
        <taxon>Sar</taxon>
        <taxon>Stramenopiles</taxon>
        <taxon>Oomycota</taxon>
        <taxon>Peronosporales</taxon>
        <taxon>Peronosporaceae</taxon>
        <taxon>Phytophthora</taxon>
    </lineage>
</organism>
<evidence type="ECO:0000250" key="1">
    <source>
        <dbReference type="UniProtKB" id="L7NCR0"/>
    </source>
</evidence>
<evidence type="ECO:0000255" key="2"/>
<evidence type="ECO:0000255" key="3">
    <source>
        <dbReference type="PROSITE-ProRule" id="PRU00498"/>
    </source>
</evidence>
<evidence type="ECO:0000256" key="4">
    <source>
        <dbReference type="SAM" id="MobiDB-lite"/>
    </source>
</evidence>
<evidence type="ECO:0000269" key="5">
    <source>
    </source>
</evidence>
<evidence type="ECO:0000303" key="6">
    <source>
    </source>
</evidence>
<evidence type="ECO:0000303" key="7">
    <source>
    </source>
</evidence>
<evidence type="ECO:0000305" key="8"/>
<evidence type="ECO:0000305" key="9">
    <source>
    </source>
</evidence>
<evidence type="ECO:0000305" key="10">
    <source>
    </source>
</evidence>
<name>NLP7_PHYCP</name>
<feature type="signal peptide" evidence="2">
    <location>
        <begin position="1"/>
        <end position="19"/>
    </location>
</feature>
<feature type="chain" id="PRO_5003982419" description="NLP effector protein 7">
    <location>
        <begin position="20"/>
        <end position="318"/>
    </location>
</feature>
<feature type="region of interest" description="Disordered" evidence="4">
    <location>
        <begin position="23"/>
        <end position="42"/>
    </location>
</feature>
<feature type="region of interest" description="Disordered" evidence="4">
    <location>
        <begin position="51"/>
        <end position="96"/>
    </location>
</feature>
<feature type="short sequence motif" description="Conserved undecapeptide motif I" evidence="1">
    <location>
        <begin position="185"/>
        <end position="195"/>
    </location>
</feature>
<feature type="short sequence motif" description="Hepta-peptide GHRHDWE motif II" evidence="10">
    <location>
        <begin position="202"/>
        <end position="208"/>
    </location>
</feature>
<feature type="compositionally biased region" description="Low complexity" evidence="4">
    <location>
        <begin position="23"/>
        <end position="41"/>
    </location>
</feature>
<feature type="compositionally biased region" description="Polar residues" evidence="4">
    <location>
        <begin position="55"/>
        <end position="65"/>
    </location>
</feature>
<feature type="compositionally biased region" description="Pro residues" evidence="4">
    <location>
        <begin position="73"/>
        <end position="96"/>
    </location>
</feature>
<feature type="glycosylation site" description="N-linked (GlcNAc...) asparagine" evidence="3">
    <location>
        <position position="60"/>
    </location>
</feature>